<protein>
    <recommendedName>
        <fullName>Drug sensory protein A</fullName>
        <ecNumber>2.7.13.3</ecNumber>
    </recommendedName>
</protein>
<comment type="catalytic activity">
    <reaction>
        <text>ATP + protein L-histidine = ADP + protein N-phospho-L-histidine.</text>
        <dbReference type="EC" id="2.7.13.3"/>
    </reaction>
</comment>
<comment type="subcellular location">
    <subcellularLocation>
        <location evidence="5">Cell membrane</location>
        <topology evidence="5">Multi-pass membrane protein</topology>
    </subcellularLocation>
</comment>
<comment type="miscellaneous">
    <text>Mutations in dspA results in resistance to herbicides difunon, diuron and calmodulin antagonists chlorpromazine and trifluoperazine.</text>
</comment>
<accession>P20169</accession>
<accession>Q55232</accession>
<feature type="chain" id="PRO_0000074758" description="Drug sensory protein A">
    <location>
        <begin position="1"/>
        <end position="663"/>
    </location>
</feature>
<feature type="transmembrane region" description="Helical" evidence="1">
    <location>
        <begin position="32"/>
        <end position="52"/>
    </location>
</feature>
<feature type="transmembrane region" description="Helical" evidence="1">
    <location>
        <begin position="165"/>
        <end position="185"/>
    </location>
</feature>
<feature type="transmembrane region" description="Helical" evidence="1">
    <location>
        <begin position="199"/>
        <end position="219"/>
    </location>
</feature>
<feature type="domain" description="HAMP" evidence="2">
    <location>
        <begin position="220"/>
        <end position="272"/>
    </location>
</feature>
<feature type="domain" description="PAS" evidence="4">
    <location>
        <begin position="281"/>
        <end position="351"/>
    </location>
</feature>
<feature type="domain" description="Histidine kinase" evidence="3">
    <location>
        <begin position="429"/>
        <end position="656"/>
    </location>
</feature>
<feature type="modified residue" description="Phosphohistidine; by autocatalysis" evidence="3">
    <location>
        <position position="432"/>
    </location>
</feature>
<keyword id="KW-0067">ATP-binding</keyword>
<keyword id="KW-1003">Cell membrane</keyword>
<keyword id="KW-0359">Herbicide resistance</keyword>
<keyword id="KW-0418">Kinase</keyword>
<keyword id="KW-0472">Membrane</keyword>
<keyword id="KW-0547">Nucleotide-binding</keyword>
<keyword id="KW-0597">Phosphoprotein</keyword>
<keyword id="KW-1185">Reference proteome</keyword>
<keyword id="KW-0808">Transferase</keyword>
<keyword id="KW-0812">Transmembrane</keyword>
<keyword id="KW-1133">Transmembrane helix</keyword>
<keyword id="KW-0902">Two-component regulatory system</keyword>
<gene>
    <name type="primary">dspA</name>
    <name type="synonym">dfr</name>
    <name type="ordered locus">sll0698</name>
</gene>
<evidence type="ECO:0000255" key="1"/>
<evidence type="ECO:0000255" key="2">
    <source>
        <dbReference type="PROSITE-ProRule" id="PRU00102"/>
    </source>
</evidence>
<evidence type="ECO:0000255" key="3">
    <source>
        <dbReference type="PROSITE-ProRule" id="PRU00107"/>
    </source>
</evidence>
<evidence type="ECO:0000255" key="4">
    <source>
        <dbReference type="PROSITE-ProRule" id="PRU00140"/>
    </source>
</evidence>
<evidence type="ECO:0000305" key="5"/>
<dbReference type="EC" id="2.7.13.3"/>
<dbReference type="EMBL" id="X72856">
    <property type="protein sequence ID" value="CAA51377.1"/>
    <property type="molecule type" value="Genomic_DNA"/>
</dbReference>
<dbReference type="EMBL" id="BA000022">
    <property type="protein sequence ID" value="BAA16687.1"/>
    <property type="molecule type" value="Genomic_DNA"/>
</dbReference>
<dbReference type="EMBL" id="J04195">
    <property type="status" value="NOT_ANNOTATED_CDS"/>
    <property type="molecule type" value="Genomic_DNA"/>
</dbReference>
<dbReference type="PIR" id="S74535">
    <property type="entry name" value="S74535"/>
</dbReference>
<dbReference type="SMR" id="P20169"/>
<dbReference type="FunCoup" id="P20169">
    <property type="interactions" value="347"/>
</dbReference>
<dbReference type="IntAct" id="P20169">
    <property type="interactions" value="1"/>
</dbReference>
<dbReference type="STRING" id="1148.gene:10497542"/>
<dbReference type="PaxDb" id="1148-1651759"/>
<dbReference type="EnsemblBacteria" id="BAA16687">
    <property type="protein sequence ID" value="BAA16687"/>
    <property type="gene ID" value="BAA16687"/>
</dbReference>
<dbReference type="KEGG" id="syn:sll0698"/>
<dbReference type="eggNOG" id="COG5002">
    <property type="taxonomic scope" value="Bacteria"/>
</dbReference>
<dbReference type="InParanoid" id="P20169"/>
<dbReference type="PhylomeDB" id="P20169"/>
<dbReference type="BRENDA" id="2.7.13.3">
    <property type="organism ID" value="382"/>
</dbReference>
<dbReference type="Proteomes" id="UP000001425">
    <property type="component" value="Chromosome"/>
</dbReference>
<dbReference type="GO" id="GO:0005886">
    <property type="term" value="C:plasma membrane"/>
    <property type="evidence" value="ECO:0007669"/>
    <property type="project" value="UniProtKB-SubCell"/>
</dbReference>
<dbReference type="GO" id="GO:0005524">
    <property type="term" value="F:ATP binding"/>
    <property type="evidence" value="ECO:0007669"/>
    <property type="project" value="UniProtKB-KW"/>
</dbReference>
<dbReference type="GO" id="GO:0000155">
    <property type="term" value="F:phosphorelay sensor kinase activity"/>
    <property type="evidence" value="ECO:0007669"/>
    <property type="project" value="InterPro"/>
</dbReference>
<dbReference type="GO" id="GO:0006355">
    <property type="term" value="P:regulation of DNA-templated transcription"/>
    <property type="evidence" value="ECO:0007669"/>
    <property type="project" value="InterPro"/>
</dbReference>
<dbReference type="GO" id="GO:0009635">
    <property type="term" value="P:response to herbicide"/>
    <property type="evidence" value="ECO:0007669"/>
    <property type="project" value="UniProtKB-KW"/>
</dbReference>
<dbReference type="CDD" id="cd06225">
    <property type="entry name" value="HAMP"/>
    <property type="match status" value="1"/>
</dbReference>
<dbReference type="CDD" id="cd00082">
    <property type="entry name" value="HisKA"/>
    <property type="match status" value="1"/>
</dbReference>
<dbReference type="CDD" id="cd00130">
    <property type="entry name" value="PAS"/>
    <property type="match status" value="1"/>
</dbReference>
<dbReference type="FunFam" id="3.30.565.10:FF:000006">
    <property type="entry name" value="Sensor histidine kinase WalK"/>
    <property type="match status" value="1"/>
</dbReference>
<dbReference type="FunFam" id="1.10.287.130:FF:000001">
    <property type="entry name" value="Two-component sensor histidine kinase"/>
    <property type="match status" value="1"/>
</dbReference>
<dbReference type="Gene3D" id="1.10.287.130">
    <property type="match status" value="1"/>
</dbReference>
<dbReference type="Gene3D" id="6.10.340.10">
    <property type="match status" value="1"/>
</dbReference>
<dbReference type="Gene3D" id="3.30.565.10">
    <property type="entry name" value="Histidine kinase-like ATPase, C-terminal domain"/>
    <property type="match status" value="1"/>
</dbReference>
<dbReference type="Gene3D" id="3.30.450.20">
    <property type="entry name" value="PAS domain"/>
    <property type="match status" value="1"/>
</dbReference>
<dbReference type="InterPro" id="IPR003660">
    <property type="entry name" value="HAMP_dom"/>
</dbReference>
<dbReference type="InterPro" id="IPR036890">
    <property type="entry name" value="HATPase_C_sf"/>
</dbReference>
<dbReference type="InterPro" id="IPR005467">
    <property type="entry name" value="His_kinase_dom"/>
</dbReference>
<dbReference type="InterPro" id="IPR003661">
    <property type="entry name" value="HisK_dim/P_dom"/>
</dbReference>
<dbReference type="InterPro" id="IPR036097">
    <property type="entry name" value="HisK_dim/P_sf"/>
</dbReference>
<dbReference type="InterPro" id="IPR052545">
    <property type="entry name" value="Light-responsive_reg"/>
</dbReference>
<dbReference type="InterPro" id="IPR000014">
    <property type="entry name" value="PAS"/>
</dbReference>
<dbReference type="InterPro" id="IPR035965">
    <property type="entry name" value="PAS-like_dom_sf"/>
</dbReference>
<dbReference type="InterPro" id="IPR013767">
    <property type="entry name" value="PAS_fold"/>
</dbReference>
<dbReference type="InterPro" id="IPR004358">
    <property type="entry name" value="Sig_transdc_His_kin-like_C"/>
</dbReference>
<dbReference type="NCBIfam" id="NF045911">
    <property type="entry name" value="TCSHisKinNblS"/>
    <property type="match status" value="1"/>
</dbReference>
<dbReference type="PANTHER" id="PTHR42878:SF7">
    <property type="entry name" value="SENSOR HISTIDINE KINASE GLRK"/>
    <property type="match status" value="1"/>
</dbReference>
<dbReference type="PANTHER" id="PTHR42878">
    <property type="entry name" value="TWO-COMPONENT HISTIDINE KINASE"/>
    <property type="match status" value="1"/>
</dbReference>
<dbReference type="Pfam" id="PF00672">
    <property type="entry name" value="HAMP"/>
    <property type="match status" value="1"/>
</dbReference>
<dbReference type="Pfam" id="PF02518">
    <property type="entry name" value="HATPase_c"/>
    <property type="match status" value="1"/>
</dbReference>
<dbReference type="Pfam" id="PF00512">
    <property type="entry name" value="HisKA"/>
    <property type="match status" value="1"/>
</dbReference>
<dbReference type="Pfam" id="PF00989">
    <property type="entry name" value="PAS"/>
    <property type="match status" value="1"/>
</dbReference>
<dbReference type="PRINTS" id="PR00344">
    <property type="entry name" value="BCTRLSENSOR"/>
</dbReference>
<dbReference type="SMART" id="SM00304">
    <property type="entry name" value="HAMP"/>
    <property type="match status" value="1"/>
</dbReference>
<dbReference type="SMART" id="SM00387">
    <property type="entry name" value="HATPase_c"/>
    <property type="match status" value="1"/>
</dbReference>
<dbReference type="SMART" id="SM00388">
    <property type="entry name" value="HisKA"/>
    <property type="match status" value="1"/>
</dbReference>
<dbReference type="SMART" id="SM00091">
    <property type="entry name" value="PAS"/>
    <property type="match status" value="1"/>
</dbReference>
<dbReference type="SUPFAM" id="SSF55874">
    <property type="entry name" value="ATPase domain of HSP90 chaperone/DNA topoisomerase II/histidine kinase"/>
    <property type="match status" value="1"/>
</dbReference>
<dbReference type="SUPFAM" id="SSF158472">
    <property type="entry name" value="HAMP domain-like"/>
    <property type="match status" value="1"/>
</dbReference>
<dbReference type="SUPFAM" id="SSF47384">
    <property type="entry name" value="Homodimeric domain of signal transducing histidine kinase"/>
    <property type="match status" value="1"/>
</dbReference>
<dbReference type="SUPFAM" id="SSF55785">
    <property type="entry name" value="PYP-like sensor domain (PAS domain)"/>
    <property type="match status" value="1"/>
</dbReference>
<dbReference type="PROSITE" id="PS50885">
    <property type="entry name" value="HAMP"/>
    <property type="match status" value="1"/>
</dbReference>
<dbReference type="PROSITE" id="PS50109">
    <property type="entry name" value="HIS_KIN"/>
    <property type="match status" value="1"/>
</dbReference>
<dbReference type="PROSITE" id="PS50112">
    <property type="entry name" value="PAS"/>
    <property type="match status" value="1"/>
</dbReference>
<proteinExistence type="inferred from homology"/>
<organism>
    <name type="scientific">Synechocystis sp. (strain ATCC 27184 / PCC 6803 / Kazusa)</name>
    <dbReference type="NCBI Taxonomy" id="1111708"/>
    <lineage>
        <taxon>Bacteria</taxon>
        <taxon>Bacillati</taxon>
        <taxon>Cyanobacteriota</taxon>
        <taxon>Cyanophyceae</taxon>
        <taxon>Synechococcales</taxon>
        <taxon>Merismopediaceae</taxon>
        <taxon>Synechocystis</taxon>
    </lineage>
</organism>
<sequence>MGTSVSNPTAILQTMQGFLRKWWSEFNLQTRLMAAATLVVSLLMSGLTFWAVNTIQEDAQLVDTRFGRDVGLLLAANVAPMIADKNLTEVARFSSRFYENTSNIRYMIYADPSGKIFFGIPYSEETVQNSLTLERRIELPQIDPHNFDQPFVRQHHTPNGDVTDVFIPLQYQGKFLGVLAIGINPNPAAVNSSNLTRDVTIAVFISIWVMVILGAVFNALTITQPIKELLLGVKNIAAGNFKQRITLPFGGELGELIVNFNEMAERLERYEAQNIEELTAEKAKLDTLVSTIADGAMLVDTNLQLLLVNPTARRLFAWENKPIIGENLLENLPPEITAQLTQPLRELAADQGSLLFSPGHGPQEEEQDKTYAPEEFRISLTQPFPRTIRLMLTQVLDQNRENLRGIVMTVQDITREVELNEAKSQFISNVSHELRTPLFNIKSFIETLSEFGEDLSEVERKEFLETANHETDRLSRLVNDVLDLSKLESSKIYQLDAVDLYQLIEQSLRSYQLNAKDKQLQLEKILDPDLPFALGNYDLLLQVMTNLIGNSFKFTKAGGKIIVRAYPLHRSNLRAEDGPGLVRVEISDTGIGIDPEDQAAIFERFYRVENRVHTLEGTGLGLSIVKNIIAKHQSQIHLVSEVGVGTTFWFDLAVYQSMLMVVG</sequence>
<reference key="1">
    <citation type="journal article" date="1995" name="Microbiology">
        <title>The dspA gene product of the cyanobacterium Synechocystis sp. strain PCC 6803 influences sensitivity to chemically different growth inhibitors and has amino acid similarity to histidine protein kinases.</title>
        <authorList>
            <person name="Bartsevich V.V."/>
            <person name="Shestakov S.V."/>
        </authorList>
    </citation>
    <scope>NUCLEOTIDE SEQUENCE [GENOMIC DNA]</scope>
</reference>
<reference key="2">
    <citation type="journal article" date="1996" name="DNA Res.">
        <title>Sequence analysis of the genome of the unicellular cyanobacterium Synechocystis sp. strain PCC6803. II. Sequence determination of the entire genome and assignment of potential protein-coding regions.</title>
        <authorList>
            <person name="Kaneko T."/>
            <person name="Sato S."/>
            <person name="Kotani H."/>
            <person name="Tanaka A."/>
            <person name="Asamizu E."/>
            <person name="Nakamura Y."/>
            <person name="Miyajima N."/>
            <person name="Hirosawa M."/>
            <person name="Sugiura M."/>
            <person name="Sasamoto S."/>
            <person name="Kimura T."/>
            <person name="Hosouchi T."/>
            <person name="Matsuno A."/>
            <person name="Muraki A."/>
            <person name="Nakazaki N."/>
            <person name="Naruo K."/>
            <person name="Okumura S."/>
            <person name="Shimpo S."/>
            <person name="Takeuchi C."/>
            <person name="Wada T."/>
            <person name="Watanabe A."/>
            <person name="Yamada M."/>
            <person name="Yasuda M."/>
            <person name="Tabata S."/>
        </authorList>
    </citation>
    <scope>NUCLEOTIDE SEQUENCE [LARGE SCALE GENOMIC DNA]</scope>
    <source>
        <strain>ATCC 27184 / PCC 6803 / Kazusa</strain>
    </source>
</reference>
<reference key="3">
    <citation type="journal article" date="1988" name="J. Biol. Chem.">
        <title>Molecular cloning and sequencing of the psaD gene encoding subunit II of photosystem I from the cyanobacterium, Synechocystis sp. PCC 6803.</title>
        <authorList>
            <person name="Reilly P."/>
            <person name="Hulmes J.D."/>
            <person name="Pan Y.-C.E."/>
            <person name="Nelson N."/>
        </authorList>
    </citation>
    <scope>NUCLEOTIDE SEQUENCE [GENOMIC DNA] OF 1-9</scope>
</reference>
<name>DSPA_SYNY3</name>